<name>PCNA_ARCFU</name>
<dbReference type="EMBL" id="AE000782">
    <property type="protein sequence ID" value="AAB90899.1"/>
    <property type="molecule type" value="Genomic_DNA"/>
</dbReference>
<dbReference type="PIR" id="G69291">
    <property type="entry name" value="G69291"/>
</dbReference>
<dbReference type="RefSeq" id="WP_010877842.1">
    <property type="nucleotide sequence ID" value="NC_000917.1"/>
</dbReference>
<dbReference type="PDB" id="1RWZ">
    <property type="method" value="X-ray"/>
    <property type="resolution" value="1.80 A"/>
    <property type="chains" value="A=1-245"/>
</dbReference>
<dbReference type="PDB" id="1RXM">
    <property type="method" value="X-ray"/>
    <property type="resolution" value="2.80 A"/>
    <property type="chains" value="A=1-245"/>
</dbReference>
<dbReference type="PDB" id="1RXZ">
    <property type="method" value="X-ray"/>
    <property type="resolution" value="2.00 A"/>
    <property type="chains" value="A=1-245"/>
</dbReference>
<dbReference type="PDB" id="3P83">
    <property type="method" value="X-ray"/>
    <property type="resolution" value="3.05 A"/>
    <property type="chains" value="A/B/C=1-245"/>
</dbReference>
<dbReference type="PDBsum" id="1RWZ"/>
<dbReference type="PDBsum" id="1RXM"/>
<dbReference type="PDBsum" id="1RXZ"/>
<dbReference type="PDBsum" id="3P83"/>
<dbReference type="SMR" id="O29912"/>
<dbReference type="STRING" id="224325.AF_0335"/>
<dbReference type="PaxDb" id="224325-AF_0335"/>
<dbReference type="EnsemblBacteria" id="AAB90899">
    <property type="protein sequence ID" value="AAB90899"/>
    <property type="gene ID" value="AF_0335"/>
</dbReference>
<dbReference type="KEGG" id="afu:AF_0335"/>
<dbReference type="eggNOG" id="arCOG00488">
    <property type="taxonomic scope" value="Archaea"/>
</dbReference>
<dbReference type="HOGENOM" id="CLU_043978_1_1_2"/>
<dbReference type="OrthoDB" id="14749at2157"/>
<dbReference type="PhylomeDB" id="O29912"/>
<dbReference type="BRENDA" id="3.1.26.4">
    <property type="organism ID" value="414"/>
</dbReference>
<dbReference type="EvolutionaryTrace" id="O29912"/>
<dbReference type="Proteomes" id="UP000002199">
    <property type="component" value="Chromosome"/>
</dbReference>
<dbReference type="GO" id="GO:0003677">
    <property type="term" value="F:DNA binding"/>
    <property type="evidence" value="ECO:0007669"/>
    <property type="project" value="UniProtKB-UniRule"/>
</dbReference>
<dbReference type="GO" id="GO:0030337">
    <property type="term" value="F:DNA polymerase processivity factor activity"/>
    <property type="evidence" value="ECO:0007669"/>
    <property type="project" value="UniProtKB-UniRule"/>
</dbReference>
<dbReference type="GO" id="GO:0006272">
    <property type="term" value="P:leading strand elongation"/>
    <property type="evidence" value="ECO:0007669"/>
    <property type="project" value="TreeGrafter"/>
</dbReference>
<dbReference type="GO" id="GO:0006275">
    <property type="term" value="P:regulation of DNA replication"/>
    <property type="evidence" value="ECO:0007669"/>
    <property type="project" value="UniProtKB-UniRule"/>
</dbReference>
<dbReference type="CDD" id="cd00577">
    <property type="entry name" value="PCNA"/>
    <property type="match status" value="1"/>
</dbReference>
<dbReference type="Gene3D" id="3.70.10.10">
    <property type="match status" value="1"/>
</dbReference>
<dbReference type="HAMAP" id="MF_00317">
    <property type="entry name" value="DNApol_clamp_arch"/>
    <property type="match status" value="1"/>
</dbReference>
<dbReference type="IDEAL" id="IID90026"/>
<dbReference type="InterPro" id="IPR046938">
    <property type="entry name" value="DNA_clamp_sf"/>
</dbReference>
<dbReference type="InterPro" id="IPR000730">
    <property type="entry name" value="Pr_cel_nuc_antig"/>
</dbReference>
<dbReference type="InterPro" id="IPR022649">
    <property type="entry name" value="Pr_cel_nuc_antig_C"/>
</dbReference>
<dbReference type="InterPro" id="IPR022659">
    <property type="entry name" value="Pr_cel_nuc_antig_CS"/>
</dbReference>
<dbReference type="InterPro" id="IPR022648">
    <property type="entry name" value="Pr_cel_nuc_antig_N"/>
</dbReference>
<dbReference type="NCBIfam" id="NF002222">
    <property type="entry name" value="PRK01115.1-5"/>
    <property type="match status" value="1"/>
</dbReference>
<dbReference type="PANTHER" id="PTHR11352">
    <property type="entry name" value="PROLIFERATING CELL NUCLEAR ANTIGEN"/>
    <property type="match status" value="1"/>
</dbReference>
<dbReference type="PANTHER" id="PTHR11352:SF0">
    <property type="entry name" value="PROLIFERATING CELL NUCLEAR ANTIGEN"/>
    <property type="match status" value="1"/>
</dbReference>
<dbReference type="Pfam" id="PF02747">
    <property type="entry name" value="PCNA_C"/>
    <property type="match status" value="1"/>
</dbReference>
<dbReference type="Pfam" id="PF00705">
    <property type="entry name" value="PCNA_N"/>
    <property type="match status" value="1"/>
</dbReference>
<dbReference type="PRINTS" id="PR00339">
    <property type="entry name" value="PCNACYCLIN"/>
</dbReference>
<dbReference type="SUPFAM" id="SSF55979">
    <property type="entry name" value="DNA clamp"/>
    <property type="match status" value="2"/>
</dbReference>
<dbReference type="PROSITE" id="PS01251">
    <property type="entry name" value="PCNA_1"/>
    <property type="match status" value="1"/>
</dbReference>
<keyword id="KW-0002">3D-structure</keyword>
<keyword id="KW-0235">DNA replication</keyword>
<keyword id="KW-0238">DNA-binding</keyword>
<keyword id="KW-1185">Reference proteome</keyword>
<gene>
    <name evidence="1" type="primary">pcn</name>
    <name type="ordered locus">AF_0335</name>
</gene>
<feature type="chain" id="PRO_0000149192" description="DNA polymerase sliding clamp">
    <location>
        <begin position="1"/>
        <end position="245"/>
    </location>
</feature>
<feature type="strand" evidence="2">
    <location>
        <begin position="2"/>
        <end position="7"/>
    </location>
</feature>
<feature type="helix" evidence="2">
    <location>
        <begin position="8"/>
        <end position="19"/>
    </location>
</feature>
<feature type="strand" evidence="2">
    <location>
        <begin position="23"/>
        <end position="30"/>
    </location>
</feature>
<feature type="strand" evidence="2">
    <location>
        <begin position="33"/>
        <end position="39"/>
    </location>
</feature>
<feature type="strand" evidence="2">
    <location>
        <begin position="43"/>
        <end position="52"/>
    </location>
</feature>
<feature type="helix" evidence="2">
    <location>
        <begin position="53"/>
        <end position="55"/>
    </location>
</feature>
<feature type="strand" evidence="2">
    <location>
        <begin position="56"/>
        <end position="63"/>
    </location>
</feature>
<feature type="strand" evidence="2">
    <location>
        <begin position="65"/>
        <end position="70"/>
    </location>
</feature>
<feature type="helix" evidence="2">
    <location>
        <begin position="71"/>
        <end position="78"/>
    </location>
</feature>
<feature type="strand" evidence="2">
    <location>
        <begin position="85"/>
        <end position="101"/>
    </location>
</feature>
<feature type="strand" evidence="2">
    <location>
        <begin position="104"/>
        <end position="109"/>
    </location>
</feature>
<feature type="helix" evidence="2">
    <location>
        <begin position="113"/>
        <end position="115"/>
    </location>
</feature>
<feature type="strand" evidence="2">
    <location>
        <begin position="128"/>
        <end position="134"/>
    </location>
</feature>
<feature type="helix" evidence="2">
    <location>
        <begin position="135"/>
        <end position="146"/>
    </location>
</feature>
<feature type="strand" evidence="2">
    <location>
        <begin position="150"/>
        <end position="157"/>
    </location>
</feature>
<feature type="strand" evidence="2">
    <location>
        <begin position="160"/>
        <end position="166"/>
    </location>
</feature>
<feature type="strand" evidence="2">
    <location>
        <begin position="171"/>
        <end position="176"/>
    </location>
</feature>
<feature type="helix" evidence="2">
    <location>
        <begin position="178"/>
        <end position="180"/>
    </location>
</feature>
<feature type="strand" evidence="2">
    <location>
        <begin position="181"/>
        <end position="184"/>
    </location>
</feature>
<feature type="strand" evidence="2">
    <location>
        <begin position="189"/>
        <end position="194"/>
    </location>
</feature>
<feature type="helix" evidence="2">
    <location>
        <begin position="195"/>
        <end position="201"/>
    </location>
</feature>
<feature type="helix" evidence="2">
    <location>
        <begin position="202"/>
        <end position="204"/>
    </location>
</feature>
<feature type="strand" evidence="2">
    <location>
        <begin position="210"/>
        <end position="215"/>
    </location>
</feature>
<feature type="strand" evidence="2">
    <location>
        <begin position="217"/>
        <end position="219"/>
    </location>
</feature>
<feature type="strand" evidence="2">
    <location>
        <begin position="221"/>
        <end position="227"/>
    </location>
</feature>
<feature type="turn" evidence="2">
    <location>
        <begin position="228"/>
        <end position="231"/>
    </location>
</feature>
<feature type="strand" evidence="2">
    <location>
        <begin position="232"/>
        <end position="238"/>
    </location>
</feature>
<feature type="strand" evidence="3">
    <location>
        <begin position="241"/>
        <end position="243"/>
    </location>
</feature>
<comment type="function">
    <text evidence="1">Sliding clamp subunit that acts as a moving platform for DNA processing. Responsible for tethering the catalytic subunit of DNA polymerase and other proteins to DNA during high-speed replication.</text>
</comment>
<comment type="subunit">
    <text evidence="1">Homotrimer. The subunits circularize to form a toroid; DNA passes through its center. Replication factor C (RFC) is required to load the toroid on the DNA.</text>
</comment>
<comment type="similarity">
    <text evidence="1">Belongs to the PCNA family.</text>
</comment>
<evidence type="ECO:0000255" key="1">
    <source>
        <dbReference type="HAMAP-Rule" id="MF_00317"/>
    </source>
</evidence>
<evidence type="ECO:0007829" key="2">
    <source>
        <dbReference type="PDB" id="1RWZ"/>
    </source>
</evidence>
<evidence type="ECO:0007829" key="3">
    <source>
        <dbReference type="PDB" id="1RXZ"/>
    </source>
</evidence>
<proteinExistence type="evidence at protein level"/>
<reference key="1">
    <citation type="journal article" date="1997" name="Nature">
        <title>The complete genome sequence of the hyperthermophilic, sulphate-reducing archaeon Archaeoglobus fulgidus.</title>
        <authorList>
            <person name="Klenk H.-P."/>
            <person name="Clayton R.A."/>
            <person name="Tomb J.-F."/>
            <person name="White O."/>
            <person name="Nelson K.E."/>
            <person name="Ketchum K.A."/>
            <person name="Dodson R.J."/>
            <person name="Gwinn M.L."/>
            <person name="Hickey E.K."/>
            <person name="Peterson J.D."/>
            <person name="Richardson D.L."/>
            <person name="Kerlavage A.R."/>
            <person name="Graham D.E."/>
            <person name="Kyrpides N.C."/>
            <person name="Fleischmann R.D."/>
            <person name="Quackenbush J."/>
            <person name="Lee N.H."/>
            <person name="Sutton G.G."/>
            <person name="Gill S.R."/>
            <person name="Kirkness E.F."/>
            <person name="Dougherty B.A."/>
            <person name="McKenney K."/>
            <person name="Adams M.D."/>
            <person name="Loftus B.J."/>
            <person name="Peterson S.N."/>
            <person name="Reich C.I."/>
            <person name="McNeil L.K."/>
            <person name="Badger J.H."/>
            <person name="Glodek A."/>
            <person name="Zhou L."/>
            <person name="Overbeek R."/>
            <person name="Gocayne J.D."/>
            <person name="Weidman J.F."/>
            <person name="McDonald L.A."/>
            <person name="Utterback T.R."/>
            <person name="Cotton M.D."/>
            <person name="Spriggs T."/>
            <person name="Artiach P."/>
            <person name="Kaine B.P."/>
            <person name="Sykes S.M."/>
            <person name="Sadow P.W."/>
            <person name="D'Andrea K.P."/>
            <person name="Bowman C."/>
            <person name="Fujii C."/>
            <person name="Garland S.A."/>
            <person name="Mason T.M."/>
            <person name="Olsen G.J."/>
            <person name="Fraser C.M."/>
            <person name="Smith H.O."/>
            <person name="Woese C.R."/>
            <person name="Venter J.C."/>
        </authorList>
    </citation>
    <scope>NUCLEOTIDE SEQUENCE [LARGE SCALE GENOMIC DNA]</scope>
    <source>
        <strain>ATCC 49558 / DSM 4304 / JCM 9628 / NBRC 100126 / VC-16</strain>
    </source>
</reference>
<organism>
    <name type="scientific">Archaeoglobus fulgidus (strain ATCC 49558 / DSM 4304 / JCM 9628 / NBRC 100126 / VC-16)</name>
    <dbReference type="NCBI Taxonomy" id="224325"/>
    <lineage>
        <taxon>Archaea</taxon>
        <taxon>Methanobacteriati</taxon>
        <taxon>Methanobacteriota</taxon>
        <taxon>Archaeoglobi</taxon>
        <taxon>Archaeoglobales</taxon>
        <taxon>Archaeoglobaceae</taxon>
        <taxon>Archaeoglobus</taxon>
    </lineage>
</organism>
<sequence>MIDVIMTGELLKTVTRAIVALVSEARIHFLEKGLHSRAVDPANVAMVIVDIPKDSFEVYNIDEEKTIGVDMDRIFDISKSISTKDLVELIVEDESTLKVKFGSVEYKVALIDPSAIRKEPRIPELELPAKIVMDAGEFKKAIAAADKISDQVIFRSDKEGFRIEAKGDVDSIVFHMTETELIEFNGGEARSMFSVDYLKEFCKVAGSGDLLTIHLGTNYPVRLVFELVGGRAKVEYILAPRIESE</sequence>
<accession>O29912</accession>
<protein>
    <recommendedName>
        <fullName evidence="1">DNA polymerase sliding clamp</fullName>
    </recommendedName>
    <alternativeName>
        <fullName evidence="1">Proliferating cell nuclear antigen homolog</fullName>
        <shortName evidence="1">PCNA</shortName>
    </alternativeName>
</protein>